<comment type="function">
    <text evidence="1">Catalyzes the reversible oxidation of malate to oxaloacetate.</text>
</comment>
<comment type="catalytic activity">
    <reaction evidence="1">
        <text>(S)-malate + NAD(+) = oxaloacetate + NADH + H(+)</text>
        <dbReference type="Rhea" id="RHEA:21432"/>
        <dbReference type="ChEBI" id="CHEBI:15378"/>
        <dbReference type="ChEBI" id="CHEBI:15589"/>
        <dbReference type="ChEBI" id="CHEBI:16452"/>
        <dbReference type="ChEBI" id="CHEBI:57540"/>
        <dbReference type="ChEBI" id="CHEBI:57945"/>
        <dbReference type="EC" id="1.1.1.37"/>
    </reaction>
</comment>
<comment type="similarity">
    <text evidence="1">Belongs to the LDH/MDH superfamily. MDH type 3 family.</text>
</comment>
<comment type="sequence caution" evidence="2">
    <conflict type="erroneous initiation">
        <sequence resource="EMBL-CDS" id="CAH58132"/>
    </conflict>
</comment>
<dbReference type="EC" id="1.1.1.37" evidence="1"/>
<dbReference type="EMBL" id="CR767821">
    <property type="protein sequence ID" value="CAH58132.1"/>
    <property type="status" value="ALT_INIT"/>
    <property type="molecule type" value="Genomic_DNA"/>
</dbReference>
<dbReference type="EMBL" id="CR925678">
    <property type="protein sequence ID" value="CAI26918.1"/>
    <property type="molecule type" value="Genomic_DNA"/>
</dbReference>
<dbReference type="RefSeq" id="WP_011155091.1">
    <property type="nucleotide sequence ID" value="NC_006832.1"/>
</dbReference>
<dbReference type="SMR" id="Q5HBC0"/>
<dbReference type="GeneID" id="33058052"/>
<dbReference type="KEGG" id="eru:Erum4090"/>
<dbReference type="KEGG" id="erw:ERWE_CDS_04240"/>
<dbReference type="eggNOG" id="COG0039">
    <property type="taxonomic scope" value="Bacteria"/>
</dbReference>
<dbReference type="HOGENOM" id="CLU_045401_2_1_5"/>
<dbReference type="Proteomes" id="UP000001021">
    <property type="component" value="Chromosome"/>
</dbReference>
<dbReference type="GO" id="GO:0004459">
    <property type="term" value="F:L-lactate dehydrogenase activity"/>
    <property type="evidence" value="ECO:0007669"/>
    <property type="project" value="TreeGrafter"/>
</dbReference>
<dbReference type="GO" id="GO:0030060">
    <property type="term" value="F:L-malate dehydrogenase (NAD+) activity"/>
    <property type="evidence" value="ECO:0007669"/>
    <property type="project" value="UniProtKB-UniRule"/>
</dbReference>
<dbReference type="GO" id="GO:0006089">
    <property type="term" value="P:lactate metabolic process"/>
    <property type="evidence" value="ECO:0007669"/>
    <property type="project" value="TreeGrafter"/>
</dbReference>
<dbReference type="GO" id="GO:0006099">
    <property type="term" value="P:tricarboxylic acid cycle"/>
    <property type="evidence" value="ECO:0007669"/>
    <property type="project" value="UniProtKB-UniRule"/>
</dbReference>
<dbReference type="CDD" id="cd01339">
    <property type="entry name" value="LDH-like_MDH"/>
    <property type="match status" value="1"/>
</dbReference>
<dbReference type="FunFam" id="3.40.50.720:FF:000018">
    <property type="entry name" value="Malate dehydrogenase"/>
    <property type="match status" value="1"/>
</dbReference>
<dbReference type="FunFam" id="3.90.110.10:FF:000004">
    <property type="entry name" value="Malate dehydrogenase"/>
    <property type="match status" value="1"/>
</dbReference>
<dbReference type="Gene3D" id="3.90.110.10">
    <property type="entry name" value="Lactate dehydrogenase/glycoside hydrolase, family 4, C-terminal"/>
    <property type="match status" value="1"/>
</dbReference>
<dbReference type="Gene3D" id="3.40.50.720">
    <property type="entry name" value="NAD(P)-binding Rossmann-like Domain"/>
    <property type="match status" value="1"/>
</dbReference>
<dbReference type="HAMAP" id="MF_00487">
    <property type="entry name" value="Malate_dehydrog_3"/>
    <property type="match status" value="1"/>
</dbReference>
<dbReference type="InterPro" id="IPR001557">
    <property type="entry name" value="L-lactate/malate_DH"/>
</dbReference>
<dbReference type="InterPro" id="IPR022383">
    <property type="entry name" value="Lactate/malate_DH_C"/>
</dbReference>
<dbReference type="InterPro" id="IPR001236">
    <property type="entry name" value="Lactate/malate_DH_N"/>
</dbReference>
<dbReference type="InterPro" id="IPR015955">
    <property type="entry name" value="Lactate_DH/Glyco_Ohase_4_C"/>
</dbReference>
<dbReference type="InterPro" id="IPR011275">
    <property type="entry name" value="Malate_DH_type3"/>
</dbReference>
<dbReference type="InterPro" id="IPR036291">
    <property type="entry name" value="NAD(P)-bd_dom_sf"/>
</dbReference>
<dbReference type="NCBIfam" id="TIGR01763">
    <property type="entry name" value="MalateDH_bact"/>
    <property type="match status" value="1"/>
</dbReference>
<dbReference type="NCBIfam" id="NF004863">
    <property type="entry name" value="PRK06223.1"/>
    <property type="match status" value="1"/>
</dbReference>
<dbReference type="PANTHER" id="PTHR43128">
    <property type="entry name" value="L-2-HYDROXYCARBOXYLATE DEHYDROGENASE (NAD(P)(+))"/>
    <property type="match status" value="1"/>
</dbReference>
<dbReference type="PANTHER" id="PTHR43128:SF16">
    <property type="entry name" value="L-LACTATE DEHYDROGENASE"/>
    <property type="match status" value="1"/>
</dbReference>
<dbReference type="Pfam" id="PF02866">
    <property type="entry name" value="Ldh_1_C"/>
    <property type="match status" value="1"/>
</dbReference>
<dbReference type="Pfam" id="PF00056">
    <property type="entry name" value="Ldh_1_N"/>
    <property type="match status" value="1"/>
</dbReference>
<dbReference type="PIRSF" id="PIRSF000102">
    <property type="entry name" value="Lac_mal_DH"/>
    <property type="match status" value="1"/>
</dbReference>
<dbReference type="PRINTS" id="PR00086">
    <property type="entry name" value="LLDHDRGNASE"/>
</dbReference>
<dbReference type="SUPFAM" id="SSF56327">
    <property type="entry name" value="LDH C-terminal domain-like"/>
    <property type="match status" value="1"/>
</dbReference>
<dbReference type="SUPFAM" id="SSF51735">
    <property type="entry name" value="NAD(P)-binding Rossmann-fold domains"/>
    <property type="match status" value="1"/>
</dbReference>
<evidence type="ECO:0000255" key="1">
    <source>
        <dbReference type="HAMAP-Rule" id="MF_00487"/>
    </source>
</evidence>
<evidence type="ECO:0000305" key="2"/>
<feature type="chain" id="PRO_0000241949" description="Malate dehydrogenase">
    <location>
        <begin position="1"/>
        <end position="313"/>
    </location>
</feature>
<feature type="active site" description="Proton acceptor" evidence="1">
    <location>
        <position position="177"/>
    </location>
</feature>
<feature type="binding site" evidence="1">
    <location>
        <begin position="11"/>
        <end position="16"/>
    </location>
    <ligand>
        <name>NAD(+)</name>
        <dbReference type="ChEBI" id="CHEBI:57540"/>
    </ligand>
</feature>
<feature type="binding site" evidence="1">
    <location>
        <position position="35"/>
    </location>
    <ligand>
        <name>NAD(+)</name>
        <dbReference type="ChEBI" id="CHEBI:57540"/>
    </ligand>
</feature>
<feature type="binding site" evidence="1">
    <location>
        <position position="84"/>
    </location>
    <ligand>
        <name>substrate</name>
    </ligand>
</feature>
<feature type="binding site" evidence="1">
    <location>
        <position position="90"/>
    </location>
    <ligand>
        <name>substrate</name>
    </ligand>
</feature>
<feature type="binding site" evidence="1">
    <location>
        <position position="97"/>
    </location>
    <ligand>
        <name>NAD(+)</name>
        <dbReference type="ChEBI" id="CHEBI:57540"/>
    </ligand>
</feature>
<feature type="binding site" evidence="1">
    <location>
        <begin position="120"/>
        <end position="122"/>
    </location>
    <ligand>
        <name>NAD(+)</name>
        <dbReference type="ChEBI" id="CHEBI:57540"/>
    </ligand>
</feature>
<feature type="binding site" evidence="1">
    <location>
        <position position="122"/>
    </location>
    <ligand>
        <name>substrate</name>
    </ligand>
</feature>
<feature type="binding site" evidence="1">
    <location>
        <position position="153"/>
    </location>
    <ligand>
        <name>substrate</name>
    </ligand>
</feature>
<organism>
    <name type="scientific">Ehrlichia ruminantium (strain Welgevonden)</name>
    <dbReference type="NCBI Taxonomy" id="254945"/>
    <lineage>
        <taxon>Bacteria</taxon>
        <taxon>Pseudomonadati</taxon>
        <taxon>Pseudomonadota</taxon>
        <taxon>Alphaproteobacteria</taxon>
        <taxon>Rickettsiales</taxon>
        <taxon>Anaplasmataceae</taxon>
        <taxon>Ehrlichia</taxon>
    </lineage>
</organism>
<keyword id="KW-0520">NAD</keyword>
<keyword id="KW-0560">Oxidoreductase</keyword>
<keyword id="KW-0816">Tricarboxylic acid cycle</keyword>
<protein>
    <recommendedName>
        <fullName evidence="1">Malate dehydrogenase</fullName>
        <ecNumber evidence="1">1.1.1.37</ecNumber>
    </recommendedName>
</protein>
<accession>Q5HBC0</accession>
<accession>Q5FEX9</accession>
<proteinExistence type="inferred from homology"/>
<name>MDH_EHRRW</name>
<gene>
    <name evidence="1" type="primary">mdh</name>
    <name type="ordered locus">Erum4090</name>
    <name type="ordered locus">ERWE_CDS_04240</name>
</gene>
<sequence>MIQSKKIALIGSGNIGGMIAYLIRLKNLGDVVLLDINDGMAKGKALDIAESSPIGKYNGEIFGTNNYADIENADAIIVTAGITRKPGMSRDDLISTNVNIIKEIATNIAKYAPNAFVIVVTNPLDVMVLAMYRYSHLPSNMIVGMAGVLDSARFSYFIAKELNVSVESVDSLVLGGHGDIMLPLIRYSSVSGVSIADLIKLGMITHDKVTEIVERTRKGGEEIVSLLKTGSAYYAPAESAVLMLDSYLNDKKLMLPCSAYLKGEYGVHDLFVGVPIIIGKNGVEKIVELQLTEEENSIFNNSVALIQNLVANI</sequence>
<reference key="1">
    <citation type="journal article" date="2005" name="Proc. Natl. Acad. Sci. U.S.A.">
        <title>The genome of the heartwater agent Ehrlichia ruminantium contains multiple tandem repeats of actively variable copy number.</title>
        <authorList>
            <person name="Collins N.E."/>
            <person name="Liebenberg J."/>
            <person name="de Villiers E.P."/>
            <person name="Brayton K.A."/>
            <person name="Louw E."/>
            <person name="Pretorius A."/>
            <person name="Faber F.E."/>
            <person name="van Heerden H."/>
            <person name="Josemans A."/>
            <person name="van Kleef M."/>
            <person name="Steyn H.C."/>
            <person name="van Strijp M.F."/>
            <person name="Zweygarth E."/>
            <person name="Jongejan F."/>
            <person name="Maillard J.C."/>
            <person name="Berthier D."/>
            <person name="Botha M."/>
            <person name="Joubert F."/>
            <person name="Corton C.H."/>
            <person name="Thomson N.R."/>
            <person name="Allsopp M.T."/>
            <person name="Allsopp B.A."/>
        </authorList>
    </citation>
    <scope>NUCLEOTIDE SEQUENCE [LARGE SCALE GENOMIC DNA]</scope>
    <source>
        <strain>Welgevonden</strain>
    </source>
</reference>
<reference key="2">
    <citation type="journal article" date="2006" name="J. Bacteriol.">
        <title>Comparative genomic analysis of three strains of Ehrlichia ruminantium reveals an active process of genome size plasticity.</title>
        <authorList>
            <person name="Frutos R."/>
            <person name="Viari A."/>
            <person name="Ferraz C."/>
            <person name="Morgat A."/>
            <person name="Eychenie S."/>
            <person name="Kandassamy Y."/>
            <person name="Chantal I."/>
            <person name="Bensaid A."/>
            <person name="Coissac E."/>
            <person name="Vachiery N."/>
            <person name="Demaille J."/>
            <person name="Martinez D."/>
        </authorList>
    </citation>
    <scope>NUCLEOTIDE SEQUENCE [LARGE SCALE GENOMIC DNA]</scope>
    <source>
        <strain>Welgevonden</strain>
    </source>
</reference>